<feature type="chain" id="PRO_1000134016" description="Photosystem II reaction center protein T">
    <location>
        <begin position="1"/>
        <end position="31"/>
    </location>
</feature>
<feature type="transmembrane region" description="Helical" evidence="1">
    <location>
        <begin position="3"/>
        <end position="23"/>
    </location>
</feature>
<reference key="1">
    <citation type="journal article" date="2007" name="DNA Res.">
        <title>Complete genomic structure of the bloom-forming toxic cyanobacterium Microcystis aeruginosa NIES-843.</title>
        <authorList>
            <person name="Kaneko T."/>
            <person name="Nakajima N."/>
            <person name="Okamoto S."/>
            <person name="Suzuki I."/>
            <person name="Tanabe Y."/>
            <person name="Tamaoki M."/>
            <person name="Nakamura Y."/>
            <person name="Kasai F."/>
            <person name="Watanabe A."/>
            <person name="Kawashima K."/>
            <person name="Kishida Y."/>
            <person name="Ono A."/>
            <person name="Shimizu Y."/>
            <person name="Takahashi C."/>
            <person name="Minami C."/>
            <person name="Fujishiro T."/>
            <person name="Kohara M."/>
            <person name="Katoh M."/>
            <person name="Nakazaki N."/>
            <person name="Nakayama S."/>
            <person name="Yamada M."/>
            <person name="Tabata S."/>
            <person name="Watanabe M.M."/>
        </authorList>
    </citation>
    <scope>NUCLEOTIDE SEQUENCE [LARGE SCALE GENOMIC DNA]</scope>
    <source>
        <strain>NIES-843 / IAM M-247</strain>
    </source>
</reference>
<keyword id="KW-0472">Membrane</keyword>
<keyword id="KW-0602">Photosynthesis</keyword>
<keyword id="KW-0604">Photosystem II</keyword>
<keyword id="KW-0793">Thylakoid</keyword>
<keyword id="KW-0812">Transmembrane</keyword>
<keyword id="KW-1133">Transmembrane helix</keyword>
<sequence>MESVAYILVLTMALSVIFFAIAFREPPRIQK</sequence>
<accession>B0JTA8</accession>
<protein>
    <recommendedName>
        <fullName evidence="1">Photosystem II reaction center protein T</fullName>
        <shortName evidence="1">PSII-T</shortName>
    </recommendedName>
</protein>
<dbReference type="EMBL" id="AP009552">
    <property type="protein sequence ID" value="BAG04211.1"/>
    <property type="molecule type" value="Genomic_DNA"/>
</dbReference>
<dbReference type="RefSeq" id="WP_012267019.1">
    <property type="nucleotide sequence ID" value="NC_010296.1"/>
</dbReference>
<dbReference type="SMR" id="B0JTA8"/>
<dbReference type="STRING" id="449447.MAE_43890"/>
<dbReference type="PaxDb" id="449447-MAE_43890"/>
<dbReference type="EnsemblBacteria" id="BAG04211">
    <property type="protein sequence ID" value="BAG04211"/>
    <property type="gene ID" value="MAE_43890"/>
</dbReference>
<dbReference type="KEGG" id="mar:MAE_43890"/>
<dbReference type="eggNOG" id="ENOG5033APQ">
    <property type="taxonomic scope" value="Bacteria"/>
</dbReference>
<dbReference type="HOGENOM" id="CLU_217078_1_0_3"/>
<dbReference type="BioCyc" id="MAER449447:MAE_RS30390-MONOMER"/>
<dbReference type="Proteomes" id="UP000001510">
    <property type="component" value="Chromosome"/>
</dbReference>
<dbReference type="GO" id="GO:0009539">
    <property type="term" value="C:photosystem II reaction center"/>
    <property type="evidence" value="ECO:0007669"/>
    <property type="project" value="InterPro"/>
</dbReference>
<dbReference type="GO" id="GO:0031676">
    <property type="term" value="C:plasma membrane-derived thylakoid membrane"/>
    <property type="evidence" value="ECO:0007669"/>
    <property type="project" value="UniProtKB-SubCell"/>
</dbReference>
<dbReference type="GO" id="GO:0015979">
    <property type="term" value="P:photosynthesis"/>
    <property type="evidence" value="ECO:0007669"/>
    <property type="project" value="UniProtKB-UniRule"/>
</dbReference>
<dbReference type="HAMAP" id="MF_00808">
    <property type="entry name" value="PSII_PsbT"/>
    <property type="match status" value="1"/>
</dbReference>
<dbReference type="InterPro" id="IPR001743">
    <property type="entry name" value="PSII_PsbT"/>
</dbReference>
<dbReference type="InterPro" id="IPR037268">
    <property type="entry name" value="PSII_PsbT_sf"/>
</dbReference>
<dbReference type="NCBIfam" id="NF008825">
    <property type="entry name" value="PRK11875.1"/>
    <property type="match status" value="1"/>
</dbReference>
<dbReference type="PANTHER" id="PTHR36411">
    <property type="match status" value="1"/>
</dbReference>
<dbReference type="PANTHER" id="PTHR36411:SF2">
    <property type="entry name" value="PHOTOSYSTEM II REACTION CENTER PROTEIN T"/>
    <property type="match status" value="1"/>
</dbReference>
<dbReference type="Pfam" id="PF01405">
    <property type="entry name" value="PsbT"/>
    <property type="match status" value="1"/>
</dbReference>
<dbReference type="SUPFAM" id="SSF161029">
    <property type="entry name" value="Photosystem II reaction center protein T, PsbT"/>
    <property type="match status" value="1"/>
</dbReference>
<gene>
    <name evidence="1" type="primary">psbT</name>
    <name type="ordered locus">MAE_43890</name>
</gene>
<proteinExistence type="inferred from homology"/>
<organism>
    <name type="scientific">Microcystis aeruginosa (strain NIES-843 / IAM M-2473)</name>
    <dbReference type="NCBI Taxonomy" id="449447"/>
    <lineage>
        <taxon>Bacteria</taxon>
        <taxon>Bacillati</taxon>
        <taxon>Cyanobacteriota</taxon>
        <taxon>Cyanophyceae</taxon>
        <taxon>Oscillatoriophycideae</taxon>
        <taxon>Chroococcales</taxon>
        <taxon>Microcystaceae</taxon>
        <taxon>Microcystis</taxon>
    </lineage>
</organism>
<evidence type="ECO:0000255" key="1">
    <source>
        <dbReference type="HAMAP-Rule" id="MF_00808"/>
    </source>
</evidence>
<comment type="function">
    <text evidence="1">Found at the monomer-monomer interface of the photosystem II (PS II) dimer, plays a role in assembly and dimerization of PSII. PSII is a light-driven water plastoquinone oxidoreductase, using light energy to abstract electrons from H(2)O, generating a proton gradient subsequently used for ATP formation.</text>
</comment>
<comment type="subunit">
    <text evidence="1">PSII is composed of 1 copy each of membrane proteins PsbA, PsbB, PsbC, PsbD, PsbE, PsbF, PsbH, PsbI, PsbJ, PsbK, PsbL, PsbM, PsbT, PsbX, PsbY, PsbZ, Psb30/Ycf12, peripheral proteins PsbO, CyanoQ (PsbQ), PsbU, PsbV and a large number of cofactors. It forms dimeric complexes.</text>
</comment>
<comment type="subcellular location">
    <subcellularLocation>
        <location evidence="1">Cellular thylakoid membrane</location>
        <topology evidence="1">Single-pass membrane protein</topology>
    </subcellularLocation>
</comment>
<comment type="similarity">
    <text evidence="1">Belongs to the PsbT family.</text>
</comment>
<name>PSBT_MICAN</name>